<keyword id="KW-0067">ATP-binding</keyword>
<keyword id="KW-0963">Cytoplasm</keyword>
<keyword id="KW-0436">Ligase</keyword>
<keyword id="KW-0547">Nucleotide-binding</keyword>
<keyword id="KW-0658">Purine biosynthesis</keyword>
<sequence>MSNKPSLSYKDAGVDIDAGDALVQRIKSVAKATSRPEVVGGLGGFGALCRIPTGYTSPLLVSGTDGVGTKLKLALQLNRHDTIGIDLVAMCVNDLLVCGAEPLFFLDYYATGKLDVDVAATVVTGIGEGCKLSNCALIGGETAEMPGMYQDDDYDLAGFCVGVVEEAEVITGENVAEGDVLIALASSGAHSNGYSLVRKVIEVSGVDVTSSNEQLDGQSIQDALMAPTRIYVKAIKALQDTLGSSALHAMSHITGGGLTDNLPRVLPETLAASIDTNSWQFSELFTWLQNQGNIEQSEMYRTFNCGVGFVIVVPKDKAEAAIQTLNDAGEKAWKLGEMVKREADAVVYR</sequence>
<feature type="chain" id="PRO_0000258388" description="Phosphoribosylformylglycinamidine cyclo-ligase">
    <location>
        <begin position="1"/>
        <end position="349"/>
    </location>
</feature>
<comment type="catalytic activity">
    <reaction evidence="1">
        <text>2-formamido-N(1)-(5-O-phospho-beta-D-ribosyl)acetamidine + ATP = 5-amino-1-(5-phospho-beta-D-ribosyl)imidazole + ADP + phosphate + H(+)</text>
        <dbReference type="Rhea" id="RHEA:23032"/>
        <dbReference type="ChEBI" id="CHEBI:15378"/>
        <dbReference type="ChEBI" id="CHEBI:30616"/>
        <dbReference type="ChEBI" id="CHEBI:43474"/>
        <dbReference type="ChEBI" id="CHEBI:137981"/>
        <dbReference type="ChEBI" id="CHEBI:147287"/>
        <dbReference type="ChEBI" id="CHEBI:456216"/>
        <dbReference type="EC" id="6.3.3.1"/>
    </reaction>
</comment>
<comment type="pathway">
    <text evidence="1">Purine metabolism; IMP biosynthesis via de novo pathway; 5-amino-1-(5-phospho-D-ribosyl)imidazole from N(2)-formyl-N(1)-(5-phospho-D-ribosyl)glycinamide: step 2/2.</text>
</comment>
<comment type="subcellular location">
    <subcellularLocation>
        <location evidence="1">Cytoplasm</location>
    </subcellularLocation>
</comment>
<comment type="similarity">
    <text evidence="1">Belongs to the AIR synthase family.</text>
</comment>
<proteinExistence type="inferred from homology"/>
<protein>
    <recommendedName>
        <fullName evidence="1">Phosphoribosylformylglycinamidine cyclo-ligase</fullName>
        <ecNumber evidence="1">6.3.3.1</ecNumber>
    </recommendedName>
    <alternativeName>
        <fullName evidence="1">AIR synthase</fullName>
    </alternativeName>
    <alternativeName>
        <fullName evidence="1">AIRS</fullName>
    </alternativeName>
    <alternativeName>
        <fullName evidence="1">Phosphoribosyl-aminoimidazole synthetase</fullName>
    </alternativeName>
</protein>
<dbReference type="EC" id="6.3.3.1" evidence="1"/>
<dbReference type="EMBL" id="CP000323">
    <property type="protein sequence ID" value="ABE75633.1"/>
    <property type="molecule type" value="Genomic_DNA"/>
</dbReference>
<dbReference type="RefSeq" id="WP_011514176.1">
    <property type="nucleotide sequence ID" value="NC_007969.1"/>
</dbReference>
<dbReference type="SMR" id="Q1Q9M0"/>
<dbReference type="STRING" id="335284.Pcryo_1856"/>
<dbReference type="KEGG" id="pcr:Pcryo_1856"/>
<dbReference type="eggNOG" id="COG0150">
    <property type="taxonomic scope" value="Bacteria"/>
</dbReference>
<dbReference type="HOGENOM" id="CLU_047116_0_0_6"/>
<dbReference type="UniPathway" id="UPA00074">
    <property type="reaction ID" value="UER00129"/>
</dbReference>
<dbReference type="Proteomes" id="UP000002425">
    <property type="component" value="Chromosome"/>
</dbReference>
<dbReference type="GO" id="GO:0005829">
    <property type="term" value="C:cytosol"/>
    <property type="evidence" value="ECO:0007669"/>
    <property type="project" value="TreeGrafter"/>
</dbReference>
<dbReference type="GO" id="GO:0005524">
    <property type="term" value="F:ATP binding"/>
    <property type="evidence" value="ECO:0007669"/>
    <property type="project" value="UniProtKB-KW"/>
</dbReference>
<dbReference type="GO" id="GO:0004637">
    <property type="term" value="F:phosphoribosylamine-glycine ligase activity"/>
    <property type="evidence" value="ECO:0007669"/>
    <property type="project" value="TreeGrafter"/>
</dbReference>
<dbReference type="GO" id="GO:0004641">
    <property type="term" value="F:phosphoribosylformylglycinamidine cyclo-ligase activity"/>
    <property type="evidence" value="ECO:0007669"/>
    <property type="project" value="UniProtKB-UniRule"/>
</dbReference>
<dbReference type="GO" id="GO:0006189">
    <property type="term" value="P:'de novo' IMP biosynthetic process"/>
    <property type="evidence" value="ECO:0007669"/>
    <property type="project" value="UniProtKB-UniRule"/>
</dbReference>
<dbReference type="GO" id="GO:0046084">
    <property type="term" value="P:adenine biosynthetic process"/>
    <property type="evidence" value="ECO:0007669"/>
    <property type="project" value="TreeGrafter"/>
</dbReference>
<dbReference type="CDD" id="cd02196">
    <property type="entry name" value="PurM"/>
    <property type="match status" value="1"/>
</dbReference>
<dbReference type="FunFam" id="3.30.1330.10:FF:000001">
    <property type="entry name" value="Phosphoribosylformylglycinamidine cyclo-ligase"/>
    <property type="match status" value="1"/>
</dbReference>
<dbReference type="FunFam" id="3.90.650.10:FF:000001">
    <property type="entry name" value="Phosphoribosylformylglycinamidine cyclo-ligase"/>
    <property type="match status" value="1"/>
</dbReference>
<dbReference type="Gene3D" id="3.90.650.10">
    <property type="entry name" value="PurM-like C-terminal domain"/>
    <property type="match status" value="1"/>
</dbReference>
<dbReference type="Gene3D" id="3.30.1330.10">
    <property type="entry name" value="PurM-like, N-terminal domain"/>
    <property type="match status" value="1"/>
</dbReference>
<dbReference type="HAMAP" id="MF_00741">
    <property type="entry name" value="AIRS"/>
    <property type="match status" value="1"/>
</dbReference>
<dbReference type="InterPro" id="IPR010918">
    <property type="entry name" value="PurM-like_C_dom"/>
</dbReference>
<dbReference type="InterPro" id="IPR036676">
    <property type="entry name" value="PurM-like_C_sf"/>
</dbReference>
<dbReference type="InterPro" id="IPR016188">
    <property type="entry name" value="PurM-like_N"/>
</dbReference>
<dbReference type="InterPro" id="IPR036921">
    <property type="entry name" value="PurM-like_N_sf"/>
</dbReference>
<dbReference type="InterPro" id="IPR004733">
    <property type="entry name" value="PurM_cligase"/>
</dbReference>
<dbReference type="NCBIfam" id="TIGR00878">
    <property type="entry name" value="purM"/>
    <property type="match status" value="1"/>
</dbReference>
<dbReference type="PANTHER" id="PTHR10520:SF12">
    <property type="entry name" value="TRIFUNCTIONAL PURINE BIOSYNTHETIC PROTEIN ADENOSINE-3"/>
    <property type="match status" value="1"/>
</dbReference>
<dbReference type="PANTHER" id="PTHR10520">
    <property type="entry name" value="TRIFUNCTIONAL PURINE BIOSYNTHETIC PROTEIN ADENOSINE-3-RELATED"/>
    <property type="match status" value="1"/>
</dbReference>
<dbReference type="Pfam" id="PF00586">
    <property type="entry name" value="AIRS"/>
    <property type="match status" value="1"/>
</dbReference>
<dbReference type="Pfam" id="PF02769">
    <property type="entry name" value="AIRS_C"/>
    <property type="match status" value="1"/>
</dbReference>
<dbReference type="SUPFAM" id="SSF56042">
    <property type="entry name" value="PurM C-terminal domain-like"/>
    <property type="match status" value="1"/>
</dbReference>
<dbReference type="SUPFAM" id="SSF55326">
    <property type="entry name" value="PurM N-terminal domain-like"/>
    <property type="match status" value="1"/>
</dbReference>
<accession>Q1Q9M0</accession>
<evidence type="ECO:0000255" key="1">
    <source>
        <dbReference type="HAMAP-Rule" id="MF_00741"/>
    </source>
</evidence>
<gene>
    <name evidence="1" type="primary">purM</name>
    <name type="ordered locus">Pcryo_1856</name>
</gene>
<reference key="1">
    <citation type="submission" date="2006-03" db="EMBL/GenBank/DDBJ databases">
        <title>Complete sequence of chromosome of Psychrobacter cryohalolentis K5.</title>
        <authorList>
            <consortium name="US DOE Joint Genome Institute"/>
            <person name="Copeland A."/>
            <person name="Lucas S."/>
            <person name="Lapidus A."/>
            <person name="Barry K."/>
            <person name="Detter J.C."/>
            <person name="Glavina T."/>
            <person name="Hammon N."/>
            <person name="Israni S."/>
            <person name="Dalin E."/>
            <person name="Tice H."/>
            <person name="Pitluck S."/>
            <person name="Brettin T."/>
            <person name="Bruce D."/>
            <person name="Han C."/>
            <person name="Tapia R."/>
            <person name="Sims D.R."/>
            <person name="Gilna P."/>
            <person name="Schmutz J."/>
            <person name="Larimer F."/>
            <person name="Land M."/>
            <person name="Hauser L."/>
            <person name="Kyrpides N."/>
            <person name="Kim E."/>
            <person name="Richardson P."/>
        </authorList>
    </citation>
    <scope>NUCLEOTIDE SEQUENCE [LARGE SCALE GENOMIC DNA]</scope>
    <source>
        <strain>ATCC BAA-1226 / DSM 17306 / VKM B-2378 / K5</strain>
    </source>
</reference>
<organism>
    <name type="scientific">Psychrobacter cryohalolentis (strain ATCC BAA-1226 / DSM 17306 / VKM B-2378 / K5)</name>
    <dbReference type="NCBI Taxonomy" id="335284"/>
    <lineage>
        <taxon>Bacteria</taxon>
        <taxon>Pseudomonadati</taxon>
        <taxon>Pseudomonadota</taxon>
        <taxon>Gammaproteobacteria</taxon>
        <taxon>Moraxellales</taxon>
        <taxon>Moraxellaceae</taxon>
        <taxon>Psychrobacter</taxon>
    </lineage>
</organism>
<name>PUR5_PSYCK</name>